<sequence>MSLGALISESRNPATMELDKLSTLAMLTCINDEDRKVPDAIRLVLPAVAQAVDLAADALKQGGRLIYLGAGTSGRLGVLDASECPPTFGVPHGMVIGLIAGGPGALLKAVEGAEDDIALGMRDLQDLQLTATDMVVGLAASGRTPYVIGALRYARELGCPTAAISCNPDSPIAQEAQVAISPVVGPEALTGSTRMKSGTAQKLVLNMLSTGAMVKLGKVYQNLMVDVKATNVKLVDRACRIVVEATGVSRAEAEHALRQTDFEVKPAILMLLKGVSAEQARQDLRQHHGYLRAAL</sequence>
<keyword id="KW-0119">Carbohydrate metabolism</keyword>
<keyword id="KW-0456">Lyase</keyword>
<accession>B1JRW1</accession>
<dbReference type="EC" id="4.2.1.126" evidence="1"/>
<dbReference type="EMBL" id="CP000950">
    <property type="protein sequence ID" value="ACA67547.1"/>
    <property type="molecule type" value="Genomic_DNA"/>
</dbReference>
<dbReference type="RefSeq" id="WP_002211565.1">
    <property type="nucleotide sequence ID" value="NZ_CP009792.1"/>
</dbReference>
<dbReference type="SMR" id="B1JRW1"/>
<dbReference type="GeneID" id="57975879"/>
<dbReference type="KEGG" id="ypy:YPK_1249"/>
<dbReference type="PATRIC" id="fig|502800.11.peg.1885"/>
<dbReference type="UniPathway" id="UPA00342"/>
<dbReference type="UniPathway" id="UPA00343"/>
<dbReference type="UniPathway" id="UPA00544"/>
<dbReference type="GO" id="GO:0097367">
    <property type="term" value="F:carbohydrate derivative binding"/>
    <property type="evidence" value="ECO:0007669"/>
    <property type="project" value="InterPro"/>
</dbReference>
<dbReference type="GO" id="GO:0016835">
    <property type="term" value="F:carbon-oxygen lyase activity"/>
    <property type="evidence" value="ECO:0007669"/>
    <property type="project" value="UniProtKB-UniRule"/>
</dbReference>
<dbReference type="GO" id="GO:0016803">
    <property type="term" value="F:ether hydrolase activity"/>
    <property type="evidence" value="ECO:0007669"/>
    <property type="project" value="TreeGrafter"/>
</dbReference>
<dbReference type="GO" id="GO:0097175">
    <property type="term" value="P:1,6-anhydro-N-acetyl-beta-muramic acid catabolic process"/>
    <property type="evidence" value="ECO:0007669"/>
    <property type="project" value="UniProtKB-UniRule"/>
</dbReference>
<dbReference type="GO" id="GO:0046348">
    <property type="term" value="P:amino sugar catabolic process"/>
    <property type="evidence" value="ECO:0007669"/>
    <property type="project" value="InterPro"/>
</dbReference>
<dbReference type="GO" id="GO:0097173">
    <property type="term" value="P:N-acetylmuramic acid catabolic process"/>
    <property type="evidence" value="ECO:0007669"/>
    <property type="project" value="UniProtKB-UniPathway"/>
</dbReference>
<dbReference type="GO" id="GO:0009254">
    <property type="term" value="P:peptidoglycan turnover"/>
    <property type="evidence" value="ECO:0007669"/>
    <property type="project" value="UniProtKB-UniRule"/>
</dbReference>
<dbReference type="CDD" id="cd05007">
    <property type="entry name" value="SIS_Etherase"/>
    <property type="match status" value="1"/>
</dbReference>
<dbReference type="FunFam" id="1.10.8.1080:FF:000001">
    <property type="entry name" value="N-acetylmuramic acid 6-phosphate etherase"/>
    <property type="match status" value="1"/>
</dbReference>
<dbReference type="FunFam" id="3.40.50.10490:FF:000014">
    <property type="entry name" value="N-acetylmuramic acid 6-phosphate etherase"/>
    <property type="match status" value="1"/>
</dbReference>
<dbReference type="Gene3D" id="1.10.8.1080">
    <property type="match status" value="1"/>
</dbReference>
<dbReference type="Gene3D" id="3.40.50.10490">
    <property type="entry name" value="Glucose-6-phosphate isomerase like protein, domain 1"/>
    <property type="match status" value="1"/>
</dbReference>
<dbReference type="HAMAP" id="MF_00068">
    <property type="entry name" value="MurQ"/>
    <property type="match status" value="1"/>
</dbReference>
<dbReference type="InterPro" id="IPR005488">
    <property type="entry name" value="Etherase_MurQ"/>
</dbReference>
<dbReference type="InterPro" id="IPR005486">
    <property type="entry name" value="Glucokinase_regulatory_CS"/>
</dbReference>
<dbReference type="InterPro" id="IPR040190">
    <property type="entry name" value="MURQ/GCKR"/>
</dbReference>
<dbReference type="InterPro" id="IPR001347">
    <property type="entry name" value="SIS_dom"/>
</dbReference>
<dbReference type="InterPro" id="IPR046348">
    <property type="entry name" value="SIS_dom_sf"/>
</dbReference>
<dbReference type="InterPro" id="IPR009060">
    <property type="entry name" value="UBA-like_sf"/>
</dbReference>
<dbReference type="NCBIfam" id="TIGR00274">
    <property type="entry name" value="N-acetylmuramic acid 6-phosphate etherase"/>
    <property type="match status" value="1"/>
</dbReference>
<dbReference type="NCBIfam" id="NF003915">
    <property type="entry name" value="PRK05441.1"/>
    <property type="match status" value="1"/>
</dbReference>
<dbReference type="NCBIfam" id="NF009222">
    <property type="entry name" value="PRK12570.1"/>
    <property type="match status" value="1"/>
</dbReference>
<dbReference type="PANTHER" id="PTHR10088">
    <property type="entry name" value="GLUCOKINASE REGULATORY PROTEIN"/>
    <property type="match status" value="1"/>
</dbReference>
<dbReference type="PANTHER" id="PTHR10088:SF5">
    <property type="entry name" value="N-ACETYLMURAMIC ACID 6-PHOSPHATE ETHERASE"/>
    <property type="match status" value="1"/>
</dbReference>
<dbReference type="Pfam" id="PF20741">
    <property type="entry name" value="GKRP-like_C"/>
    <property type="match status" value="1"/>
</dbReference>
<dbReference type="Pfam" id="PF22645">
    <property type="entry name" value="GKRP_SIS_N"/>
    <property type="match status" value="1"/>
</dbReference>
<dbReference type="SUPFAM" id="SSF53697">
    <property type="entry name" value="SIS domain"/>
    <property type="match status" value="1"/>
</dbReference>
<dbReference type="SUPFAM" id="SSF46934">
    <property type="entry name" value="UBA-like"/>
    <property type="match status" value="1"/>
</dbReference>
<dbReference type="PROSITE" id="PS01272">
    <property type="entry name" value="GCKR"/>
    <property type="match status" value="1"/>
</dbReference>
<dbReference type="PROSITE" id="PS51464">
    <property type="entry name" value="SIS"/>
    <property type="match status" value="1"/>
</dbReference>
<gene>
    <name evidence="1" type="primary">murQ</name>
    <name type="ordered locus">YPK_1249</name>
</gene>
<protein>
    <recommendedName>
        <fullName evidence="1">N-acetylmuramic acid 6-phosphate etherase</fullName>
        <shortName evidence="1">MurNAc-6-P etherase</shortName>
        <ecNumber evidence="1">4.2.1.126</ecNumber>
    </recommendedName>
    <alternativeName>
        <fullName evidence="1">N-acetylmuramic acid 6-phosphate hydrolase</fullName>
    </alternativeName>
    <alternativeName>
        <fullName evidence="1">N-acetylmuramic acid 6-phosphate lyase</fullName>
    </alternativeName>
</protein>
<comment type="function">
    <text evidence="1">Specifically catalyzes the cleavage of the D-lactyl ether substituent of MurNAc 6-phosphate, producing GlcNAc 6-phosphate and D-lactate. Together with AnmK, is also required for the utilization of anhydro-N-acetylmuramic acid (anhMurNAc) either imported from the medium or derived from its own cell wall murein, and thus plays a role in cell wall recycling.</text>
</comment>
<comment type="catalytic activity">
    <reaction evidence="1">
        <text>N-acetyl-D-muramate 6-phosphate + H2O = N-acetyl-D-glucosamine 6-phosphate + (R)-lactate</text>
        <dbReference type="Rhea" id="RHEA:26410"/>
        <dbReference type="ChEBI" id="CHEBI:15377"/>
        <dbReference type="ChEBI" id="CHEBI:16004"/>
        <dbReference type="ChEBI" id="CHEBI:57513"/>
        <dbReference type="ChEBI" id="CHEBI:58722"/>
        <dbReference type="EC" id="4.2.1.126"/>
    </reaction>
</comment>
<comment type="pathway">
    <text evidence="1">Amino-sugar metabolism; 1,6-anhydro-N-acetylmuramate degradation.</text>
</comment>
<comment type="pathway">
    <text evidence="1">Amino-sugar metabolism; N-acetylmuramate degradation.</text>
</comment>
<comment type="pathway">
    <text evidence="1">Cell wall biogenesis; peptidoglycan recycling.</text>
</comment>
<comment type="subunit">
    <text evidence="1">Homodimer.</text>
</comment>
<comment type="induction">
    <text evidence="1">Induced by MurNAc 6-phosphate that releases the repressor MurR from the DNA. Repressed by MurR in the absence of MurNAc 6-phosphate.</text>
</comment>
<comment type="miscellaneous">
    <text evidence="1">A lyase-type mechanism (elimination/hydration) is suggested for the cleavage of the lactyl ether bond of MurNAc 6-phosphate, with the formation of an alpha,beta-unsaturated aldehyde intermediate with (E)-stereochemistry, followed by the syn addition of water to give product.</text>
</comment>
<comment type="similarity">
    <text evidence="1">Belongs to the GCKR-like family. MurNAc-6-P etherase subfamily.</text>
</comment>
<proteinExistence type="inferred from homology"/>
<organism>
    <name type="scientific">Yersinia pseudotuberculosis serotype O:3 (strain YPIII)</name>
    <dbReference type="NCBI Taxonomy" id="502800"/>
    <lineage>
        <taxon>Bacteria</taxon>
        <taxon>Pseudomonadati</taxon>
        <taxon>Pseudomonadota</taxon>
        <taxon>Gammaproteobacteria</taxon>
        <taxon>Enterobacterales</taxon>
        <taxon>Yersiniaceae</taxon>
        <taxon>Yersinia</taxon>
    </lineage>
</organism>
<name>MURQ_YERPY</name>
<reference key="1">
    <citation type="submission" date="2008-02" db="EMBL/GenBank/DDBJ databases">
        <title>Complete sequence of Yersinia pseudotuberculosis YPIII.</title>
        <authorList>
            <consortium name="US DOE Joint Genome Institute"/>
            <person name="Copeland A."/>
            <person name="Lucas S."/>
            <person name="Lapidus A."/>
            <person name="Glavina del Rio T."/>
            <person name="Dalin E."/>
            <person name="Tice H."/>
            <person name="Bruce D."/>
            <person name="Goodwin L."/>
            <person name="Pitluck S."/>
            <person name="Munk A.C."/>
            <person name="Brettin T."/>
            <person name="Detter J.C."/>
            <person name="Han C."/>
            <person name="Tapia R."/>
            <person name="Schmutz J."/>
            <person name="Larimer F."/>
            <person name="Land M."/>
            <person name="Hauser L."/>
            <person name="Challacombe J.F."/>
            <person name="Green L."/>
            <person name="Lindler L.E."/>
            <person name="Nikolich M.P."/>
            <person name="Richardson P."/>
        </authorList>
    </citation>
    <scope>NUCLEOTIDE SEQUENCE [LARGE SCALE GENOMIC DNA]</scope>
    <source>
        <strain>YPIII</strain>
    </source>
</reference>
<feature type="chain" id="PRO_1000092325" description="N-acetylmuramic acid 6-phosphate etherase">
    <location>
        <begin position="1"/>
        <end position="295"/>
    </location>
</feature>
<feature type="domain" description="SIS" evidence="1">
    <location>
        <begin position="55"/>
        <end position="218"/>
    </location>
</feature>
<feature type="active site" description="Proton donor" evidence="1">
    <location>
        <position position="83"/>
    </location>
</feature>
<feature type="active site" evidence="1">
    <location>
        <position position="114"/>
    </location>
</feature>
<evidence type="ECO:0000255" key="1">
    <source>
        <dbReference type="HAMAP-Rule" id="MF_00068"/>
    </source>
</evidence>